<sequence>MQYNIILLVDGSLSLEQANQVNEKQQQTLTNVEGLQTEYLGLKELAYPIKKQLSAHYYRWKFSGDNQSTKDFKRTANINKQVLRELIINLEREYGYLASINPKKQQLALQKRAKYDEIIARENNPENPDVPVTSGLASTQPRLSRTEKAQKPKEELWDVVQKMGNFDSVQANPYRPRFKRFNAEHVNQRQNQQNNNNNRFDRNRNRQHNRFKDKQ</sequence>
<reference key="1">
    <citation type="journal article" date="1996" name="Nucleic Acids Res.">
        <title>Complete sequence analysis of the genome of the bacterium Mycoplasma pneumoniae.</title>
        <authorList>
            <person name="Himmelreich R."/>
            <person name="Hilbert H."/>
            <person name="Plagens H."/>
            <person name="Pirkl E."/>
            <person name="Li B.-C."/>
            <person name="Herrmann R."/>
        </authorList>
    </citation>
    <scope>NUCLEOTIDE SEQUENCE [LARGE SCALE GENOMIC DNA]</scope>
    <source>
        <strain>ATCC 29342 / M129 / Subtype 1</strain>
    </source>
</reference>
<name>RS6_MYCPN</name>
<evidence type="ECO:0000250" key="1"/>
<evidence type="ECO:0000256" key="2">
    <source>
        <dbReference type="SAM" id="MobiDB-lite"/>
    </source>
</evidence>
<evidence type="ECO:0000305" key="3"/>
<evidence type="ECO:0007829" key="4">
    <source>
        <dbReference type="PDB" id="8P6P"/>
    </source>
</evidence>
<accession>P75543</accession>
<gene>
    <name type="primary">rpsF</name>
    <name type="ordered locus">MPN_228</name>
    <name type="ORF">MP603</name>
</gene>
<comment type="function">
    <text evidence="1">Binds together with bS18 to 16S ribosomal RNA.</text>
</comment>
<comment type="similarity">
    <text evidence="3">Belongs to the bacterial ribosomal protein bS6 family.</text>
</comment>
<keyword id="KW-0002">3D-structure</keyword>
<keyword id="KW-1185">Reference proteome</keyword>
<keyword id="KW-0687">Ribonucleoprotein</keyword>
<keyword id="KW-0689">Ribosomal protein</keyword>
<keyword id="KW-0694">RNA-binding</keyword>
<keyword id="KW-0699">rRNA-binding</keyword>
<organism>
    <name type="scientific">Mycoplasma pneumoniae (strain ATCC 29342 / M129 / Subtype 1)</name>
    <name type="common">Mycoplasmoides pneumoniae</name>
    <dbReference type="NCBI Taxonomy" id="272634"/>
    <lineage>
        <taxon>Bacteria</taxon>
        <taxon>Bacillati</taxon>
        <taxon>Mycoplasmatota</taxon>
        <taxon>Mycoplasmoidales</taxon>
        <taxon>Mycoplasmoidaceae</taxon>
        <taxon>Mycoplasmoides</taxon>
    </lineage>
</organism>
<proteinExistence type="evidence at protein level"/>
<protein>
    <recommendedName>
        <fullName evidence="3">Small ribosomal subunit protein bS6</fullName>
    </recommendedName>
    <alternativeName>
        <fullName>30S ribosomal protein S6</fullName>
    </alternativeName>
</protein>
<feature type="chain" id="PRO_0000176800" description="Small ribosomal subunit protein bS6">
    <location>
        <begin position="1"/>
        <end position="215"/>
    </location>
</feature>
<feature type="region of interest" description="Disordered" evidence="2">
    <location>
        <begin position="121"/>
        <end position="153"/>
    </location>
</feature>
<feature type="region of interest" description="Disordered" evidence="2">
    <location>
        <begin position="187"/>
        <end position="215"/>
    </location>
</feature>
<feature type="compositionally biased region" description="Basic and acidic residues" evidence="2">
    <location>
        <begin position="144"/>
        <end position="153"/>
    </location>
</feature>
<feature type="compositionally biased region" description="Low complexity" evidence="2">
    <location>
        <begin position="188"/>
        <end position="198"/>
    </location>
</feature>
<feature type="compositionally biased region" description="Basic and acidic residues" evidence="2">
    <location>
        <begin position="199"/>
        <end position="215"/>
    </location>
</feature>
<feature type="strand" evidence="4">
    <location>
        <begin position="5"/>
        <end position="10"/>
    </location>
</feature>
<feature type="helix" evidence="4">
    <location>
        <begin position="14"/>
        <end position="27"/>
    </location>
</feature>
<feature type="strand" evidence="4">
    <location>
        <begin position="41"/>
        <end position="43"/>
    </location>
</feature>
<feature type="strand" evidence="4">
    <location>
        <begin position="55"/>
        <end position="60"/>
    </location>
</feature>
<feature type="helix" evidence="4">
    <location>
        <begin position="66"/>
        <end position="68"/>
    </location>
</feature>
<feature type="helix" evidence="4">
    <location>
        <begin position="70"/>
        <end position="76"/>
    </location>
</feature>
<feature type="strand" evidence="4">
    <location>
        <begin position="82"/>
        <end position="87"/>
    </location>
</feature>
<feature type="helix" evidence="4">
    <location>
        <begin position="90"/>
        <end position="92"/>
    </location>
</feature>
<feature type="strand" evidence="4">
    <location>
        <begin position="93"/>
        <end position="96"/>
    </location>
</feature>
<feature type="helix" evidence="4">
    <location>
        <begin position="97"/>
        <end position="100"/>
    </location>
</feature>
<feature type="helix" evidence="4">
    <location>
        <begin position="102"/>
        <end position="122"/>
    </location>
</feature>
<feature type="strand" evidence="4">
    <location>
        <begin position="125"/>
        <end position="127"/>
    </location>
</feature>
<feature type="strand" evidence="4">
    <location>
        <begin position="134"/>
        <end position="136"/>
    </location>
</feature>
<feature type="helix" evidence="4">
    <location>
        <begin position="143"/>
        <end position="148"/>
    </location>
</feature>
<feature type="strand" evidence="4">
    <location>
        <begin position="156"/>
        <end position="164"/>
    </location>
</feature>
<dbReference type="EMBL" id="U00089">
    <property type="protein sequence ID" value="AAB96251.1"/>
    <property type="molecule type" value="Genomic_DNA"/>
</dbReference>
<dbReference type="PIR" id="S73929">
    <property type="entry name" value="S73929"/>
</dbReference>
<dbReference type="RefSeq" id="NP_109916.1">
    <property type="nucleotide sequence ID" value="NC_000912.1"/>
</dbReference>
<dbReference type="RefSeq" id="WP_010874585.1">
    <property type="nucleotide sequence ID" value="NZ_OU342337.1"/>
</dbReference>
<dbReference type="PDB" id="7OOC">
    <property type="method" value="EM"/>
    <property type="resolution" value="3.70 A"/>
    <property type="chains" value="E=1-215"/>
</dbReference>
<dbReference type="PDB" id="7P6Z">
    <property type="method" value="EM"/>
    <property type="resolution" value="3.50 A"/>
    <property type="chains" value="E=1-215"/>
</dbReference>
<dbReference type="PDB" id="7PAH">
    <property type="method" value="EM"/>
    <property type="resolution" value="9.50 A"/>
    <property type="chains" value="E=1-215"/>
</dbReference>
<dbReference type="PDB" id="7PAI">
    <property type="method" value="EM"/>
    <property type="resolution" value="6.70 A"/>
    <property type="chains" value="E=1-215"/>
</dbReference>
<dbReference type="PDB" id="7PAJ">
    <property type="method" value="EM"/>
    <property type="resolution" value="7.30 A"/>
    <property type="chains" value="E=1-215"/>
</dbReference>
<dbReference type="PDB" id="7PAK">
    <property type="method" value="EM"/>
    <property type="resolution" value="5.30 A"/>
    <property type="chains" value="E=1-215"/>
</dbReference>
<dbReference type="PDB" id="7PAL">
    <property type="method" value="EM"/>
    <property type="resolution" value="4.70 A"/>
    <property type="chains" value="E=1-215"/>
</dbReference>
<dbReference type="PDB" id="7PAM">
    <property type="method" value="EM"/>
    <property type="resolution" value="6.80 A"/>
    <property type="chains" value="E=1-215"/>
</dbReference>
<dbReference type="PDB" id="7PAN">
    <property type="method" value="EM"/>
    <property type="resolution" value="9.70 A"/>
    <property type="chains" value="E=1-215"/>
</dbReference>
<dbReference type="PDB" id="7PAO">
    <property type="method" value="EM"/>
    <property type="resolution" value="7.00 A"/>
    <property type="chains" value="E=1-215"/>
</dbReference>
<dbReference type="PDB" id="7PAQ">
    <property type="method" value="EM"/>
    <property type="resolution" value="8.90 A"/>
    <property type="chains" value="E=1-215"/>
</dbReference>
<dbReference type="PDB" id="7PAR">
    <property type="method" value="EM"/>
    <property type="resolution" value="8.20 A"/>
    <property type="chains" value="E=1-215"/>
</dbReference>
<dbReference type="PDB" id="7PAS">
    <property type="method" value="EM"/>
    <property type="resolution" value="16.00 A"/>
    <property type="chains" value="E=1-215"/>
</dbReference>
<dbReference type="PDB" id="7PH9">
    <property type="method" value="EM"/>
    <property type="resolution" value="8.70 A"/>
    <property type="chains" value="E=1-215"/>
</dbReference>
<dbReference type="PDB" id="7PHA">
    <property type="method" value="EM"/>
    <property type="resolution" value="8.50 A"/>
    <property type="chains" value="E=1-215"/>
</dbReference>
<dbReference type="PDB" id="7PHB">
    <property type="method" value="EM"/>
    <property type="resolution" value="4.90 A"/>
    <property type="chains" value="E=1-215"/>
</dbReference>
<dbReference type="PDB" id="7PHC">
    <property type="method" value="EM"/>
    <property type="resolution" value="9.90 A"/>
    <property type="chains" value="E=1-215"/>
</dbReference>
<dbReference type="PDB" id="7PI8">
    <property type="method" value="EM"/>
    <property type="resolution" value="8.90 A"/>
    <property type="chains" value="E=1-215"/>
</dbReference>
<dbReference type="PDB" id="7PI9">
    <property type="method" value="EM"/>
    <property type="resolution" value="6.30 A"/>
    <property type="chains" value="E=1-215"/>
</dbReference>
<dbReference type="PDB" id="7PIA">
    <property type="method" value="EM"/>
    <property type="resolution" value="13.60 A"/>
    <property type="chains" value="E=1-215"/>
</dbReference>
<dbReference type="PDB" id="7PIB">
    <property type="method" value="EM"/>
    <property type="resolution" value="4.70 A"/>
    <property type="chains" value="E=1-215"/>
</dbReference>
<dbReference type="PDB" id="7PIC">
    <property type="method" value="EM"/>
    <property type="resolution" value="9.10 A"/>
    <property type="chains" value="E=1-215"/>
</dbReference>
<dbReference type="PDB" id="7PIO">
    <property type="method" value="EM"/>
    <property type="resolution" value="9.50 A"/>
    <property type="chains" value="E=1-215"/>
</dbReference>
<dbReference type="PDB" id="7PIP">
    <property type="method" value="EM"/>
    <property type="resolution" value="9.30 A"/>
    <property type="chains" value="E=1-215"/>
</dbReference>
<dbReference type="PDB" id="7PIQ">
    <property type="method" value="EM"/>
    <property type="resolution" value="9.70 A"/>
    <property type="chains" value="E=1-215"/>
</dbReference>
<dbReference type="PDB" id="7PIR">
    <property type="method" value="EM"/>
    <property type="resolution" value="12.10 A"/>
    <property type="chains" value="E=1-215"/>
</dbReference>
<dbReference type="PDB" id="7PIS">
    <property type="method" value="EM"/>
    <property type="resolution" value="15.00 A"/>
    <property type="chains" value="E=1-215"/>
</dbReference>
<dbReference type="PDB" id="7PIT">
    <property type="method" value="EM"/>
    <property type="resolution" value="5.70 A"/>
    <property type="chains" value="E=1-215"/>
</dbReference>
<dbReference type="PDB" id="8P6P">
    <property type="method" value="EM"/>
    <property type="resolution" value="3.20 A"/>
    <property type="chains" value="E=1-215"/>
</dbReference>
<dbReference type="PDB" id="8P7X">
    <property type="method" value="EM"/>
    <property type="resolution" value="3.03 A"/>
    <property type="chains" value="E=1-215"/>
</dbReference>
<dbReference type="PDB" id="8P7Y">
    <property type="method" value="EM"/>
    <property type="resolution" value="3.70 A"/>
    <property type="chains" value="E=1-215"/>
</dbReference>
<dbReference type="PDB" id="8P8V">
    <property type="method" value="EM"/>
    <property type="resolution" value="8.70 A"/>
    <property type="chains" value="E=1-215"/>
</dbReference>
<dbReference type="PDB" id="8P8W">
    <property type="method" value="EM"/>
    <property type="resolution" value="8.70 A"/>
    <property type="chains" value="E=1-215"/>
</dbReference>
<dbReference type="PDBsum" id="7OOC"/>
<dbReference type="PDBsum" id="7P6Z"/>
<dbReference type="PDBsum" id="7PAH"/>
<dbReference type="PDBsum" id="7PAI"/>
<dbReference type="PDBsum" id="7PAJ"/>
<dbReference type="PDBsum" id="7PAK"/>
<dbReference type="PDBsum" id="7PAL"/>
<dbReference type="PDBsum" id="7PAM"/>
<dbReference type="PDBsum" id="7PAN"/>
<dbReference type="PDBsum" id="7PAO"/>
<dbReference type="PDBsum" id="7PAQ"/>
<dbReference type="PDBsum" id="7PAR"/>
<dbReference type="PDBsum" id="7PAS"/>
<dbReference type="PDBsum" id="7PH9"/>
<dbReference type="PDBsum" id="7PHA"/>
<dbReference type="PDBsum" id="7PHB"/>
<dbReference type="PDBsum" id="7PHC"/>
<dbReference type="PDBsum" id="7PI8"/>
<dbReference type="PDBsum" id="7PI9"/>
<dbReference type="PDBsum" id="7PIA"/>
<dbReference type="PDBsum" id="7PIB"/>
<dbReference type="PDBsum" id="7PIC"/>
<dbReference type="PDBsum" id="7PIO"/>
<dbReference type="PDBsum" id="7PIP"/>
<dbReference type="PDBsum" id="7PIQ"/>
<dbReference type="PDBsum" id="7PIR"/>
<dbReference type="PDBsum" id="7PIS"/>
<dbReference type="PDBsum" id="7PIT"/>
<dbReference type="PDBsum" id="8P6P"/>
<dbReference type="PDBsum" id="8P7X"/>
<dbReference type="PDBsum" id="8P7Y"/>
<dbReference type="PDBsum" id="8P8V"/>
<dbReference type="PDBsum" id="8P8W"/>
<dbReference type="EMDB" id="EMD-13234"/>
<dbReference type="EMDB" id="EMD-13272"/>
<dbReference type="EMDB" id="EMD-13273"/>
<dbReference type="EMDB" id="EMD-13274"/>
<dbReference type="EMDB" id="EMD-13275"/>
<dbReference type="EMDB" id="EMD-13276"/>
<dbReference type="EMDB" id="EMD-13277"/>
<dbReference type="EMDB" id="EMD-13278"/>
<dbReference type="EMDB" id="EMD-13279"/>
<dbReference type="EMDB" id="EMD-13280"/>
<dbReference type="EMDB" id="EMD-13281"/>
<dbReference type="EMDB" id="EMD-13282"/>
<dbReference type="EMDB" id="EMD-13410"/>
<dbReference type="EMDB" id="EMD-13411"/>
<dbReference type="EMDB" id="EMD-13412"/>
<dbReference type="EMDB" id="EMD-13413"/>
<dbReference type="EMDB" id="EMD-13432"/>
<dbReference type="EMDB" id="EMD-13433"/>
<dbReference type="EMDB" id="EMD-13434"/>
<dbReference type="EMDB" id="EMD-13435"/>
<dbReference type="EMDB" id="EMD-13436"/>
<dbReference type="EMDB" id="EMD-13445"/>
<dbReference type="EMDB" id="EMD-13446"/>
<dbReference type="EMDB" id="EMD-13447"/>
<dbReference type="EMDB" id="EMD-13448"/>
<dbReference type="EMDB" id="EMD-13449"/>
<dbReference type="EMDB" id="EMD-13450"/>
<dbReference type="SMR" id="P75543"/>
<dbReference type="IntAct" id="P75543">
    <property type="interactions" value="24"/>
</dbReference>
<dbReference type="STRING" id="272634.MPN_228"/>
<dbReference type="EnsemblBacteria" id="AAB96251">
    <property type="protein sequence ID" value="AAB96251"/>
    <property type="gene ID" value="MPN_228"/>
</dbReference>
<dbReference type="GeneID" id="66609126"/>
<dbReference type="KEGG" id="mpn:MPN_228"/>
<dbReference type="PATRIC" id="fig|272634.6.peg.247"/>
<dbReference type="HOGENOM" id="CLU_1282053_0_0_14"/>
<dbReference type="OrthoDB" id="397558at2"/>
<dbReference type="BioCyc" id="MPNE272634:G1GJ3-365-MONOMER"/>
<dbReference type="Proteomes" id="UP000000808">
    <property type="component" value="Chromosome"/>
</dbReference>
<dbReference type="GO" id="GO:1990904">
    <property type="term" value="C:ribonucleoprotein complex"/>
    <property type="evidence" value="ECO:0007669"/>
    <property type="project" value="UniProtKB-KW"/>
</dbReference>
<dbReference type="GO" id="GO:0005840">
    <property type="term" value="C:ribosome"/>
    <property type="evidence" value="ECO:0007669"/>
    <property type="project" value="UniProtKB-KW"/>
</dbReference>
<dbReference type="GO" id="GO:0019843">
    <property type="term" value="F:rRNA binding"/>
    <property type="evidence" value="ECO:0007669"/>
    <property type="project" value="UniProtKB-UniRule"/>
</dbReference>
<dbReference type="GO" id="GO:0003735">
    <property type="term" value="F:structural constituent of ribosome"/>
    <property type="evidence" value="ECO:0007669"/>
    <property type="project" value="InterPro"/>
</dbReference>
<dbReference type="GO" id="GO:0006412">
    <property type="term" value="P:translation"/>
    <property type="evidence" value="ECO:0007669"/>
    <property type="project" value="UniProtKB-UniRule"/>
</dbReference>
<dbReference type="CDD" id="cd00473">
    <property type="entry name" value="bS6"/>
    <property type="match status" value="1"/>
</dbReference>
<dbReference type="Gene3D" id="3.30.70.60">
    <property type="match status" value="1"/>
</dbReference>
<dbReference type="HAMAP" id="MF_00360">
    <property type="entry name" value="Ribosomal_bS6"/>
    <property type="match status" value="1"/>
</dbReference>
<dbReference type="InterPro" id="IPR000529">
    <property type="entry name" value="Ribosomal_bS6"/>
</dbReference>
<dbReference type="InterPro" id="IPR020815">
    <property type="entry name" value="Ribosomal_bS6_CS"/>
</dbReference>
<dbReference type="InterPro" id="IPR035980">
    <property type="entry name" value="Ribosomal_bS6_sf"/>
</dbReference>
<dbReference type="InterPro" id="IPR020814">
    <property type="entry name" value="Ribosomal_S6_plastid/chlpt"/>
</dbReference>
<dbReference type="InterPro" id="IPR014717">
    <property type="entry name" value="Transl_elong_EF1B/ribsomal_bS6"/>
</dbReference>
<dbReference type="NCBIfam" id="TIGR00166">
    <property type="entry name" value="S6"/>
    <property type="match status" value="1"/>
</dbReference>
<dbReference type="Pfam" id="PF01250">
    <property type="entry name" value="Ribosomal_S6"/>
    <property type="match status" value="1"/>
</dbReference>
<dbReference type="SUPFAM" id="SSF54995">
    <property type="entry name" value="Ribosomal protein S6"/>
    <property type="match status" value="1"/>
</dbReference>
<dbReference type="PROSITE" id="PS01048">
    <property type="entry name" value="RIBOSOMAL_S6"/>
    <property type="match status" value="1"/>
</dbReference>